<protein>
    <recommendedName>
        <fullName evidence="1">NADH-quinone oxidoreductase subunit N</fullName>
        <ecNumber evidence="1">7.1.1.-</ecNumber>
    </recommendedName>
    <alternativeName>
        <fullName evidence="1">NADH dehydrogenase I subunit N</fullName>
    </alternativeName>
    <alternativeName>
        <fullName evidence="1">NDH-1 subunit N</fullName>
    </alternativeName>
</protein>
<sequence length="485" mass="51935">MTITPQHLIALLPLLIVGLTVVVVMLSIAWRRNHFLNATLSVIGLNAALVSLWFVGQAGAMDVTPLMRVDGFAMLYTGLVLLASLATCTFAYPWLEGYNDNQEEFYLLVLIAALGGILLANANHLAALFLGIELISLPLFGLIGYAFRQKRSLEASIKYTILSAAASSFLLFGMALVYAQSGNLSFVALGKSLGDGMLHEPLLLAGFGLMIVGLGFKLSLVPFHLWTPDVYQGAPAPVSTFLATASKIAIFGVVMRLFLYAPVGDSEAVRIVLGVIAFASIIFGNLMALSQTNIKRLLGYSSISHLGYLLVALIALQSGEMSMEAVGVYLAGYLFSSLGAFGVVSLMSSPFRGPDADSLFSYRGLFWHRPILAAVMTVMMLSLAGIPMTLGFIGKFYVLAVGVQASLWWLVAAVVVGSAIGLYYYLRVAVSLYLSAPQQLNRDAPSNWQYSAGGIVVLISALLVLVLGIYPQPLISIVQLATPLM</sequence>
<reference key="1">
    <citation type="submission" date="2007-08" db="EMBL/GenBank/DDBJ databases">
        <authorList>
            <consortium name="The Citrobacter koseri Genome Sequencing Project"/>
            <person name="McClelland M."/>
            <person name="Sanderson E.K."/>
            <person name="Porwollik S."/>
            <person name="Spieth J."/>
            <person name="Clifton W.S."/>
            <person name="Latreille P."/>
            <person name="Courtney L."/>
            <person name="Wang C."/>
            <person name="Pepin K."/>
            <person name="Bhonagiri V."/>
            <person name="Nash W."/>
            <person name="Johnson M."/>
            <person name="Thiruvilangam P."/>
            <person name="Wilson R."/>
        </authorList>
    </citation>
    <scope>NUCLEOTIDE SEQUENCE [LARGE SCALE GENOMIC DNA]</scope>
    <source>
        <strain>ATCC BAA-895 / CDC 4225-83 / SGSC4696</strain>
    </source>
</reference>
<proteinExistence type="inferred from homology"/>
<feature type="chain" id="PRO_1000017375" description="NADH-quinone oxidoreductase subunit N">
    <location>
        <begin position="1"/>
        <end position="485"/>
    </location>
</feature>
<feature type="transmembrane region" description="Helical" evidence="1">
    <location>
        <begin position="8"/>
        <end position="28"/>
    </location>
</feature>
<feature type="transmembrane region" description="Helical" evidence="1">
    <location>
        <begin position="35"/>
        <end position="55"/>
    </location>
</feature>
<feature type="transmembrane region" description="Helical" evidence="1">
    <location>
        <begin position="71"/>
        <end position="91"/>
    </location>
</feature>
<feature type="transmembrane region" description="Helical" evidence="1">
    <location>
        <begin position="105"/>
        <end position="125"/>
    </location>
</feature>
<feature type="transmembrane region" description="Helical" evidence="1">
    <location>
        <begin position="127"/>
        <end position="147"/>
    </location>
</feature>
<feature type="transmembrane region" description="Helical" evidence="1">
    <location>
        <begin position="159"/>
        <end position="179"/>
    </location>
</feature>
<feature type="transmembrane region" description="Helical" evidence="1">
    <location>
        <begin position="203"/>
        <end position="223"/>
    </location>
</feature>
<feature type="transmembrane region" description="Helical" evidence="1">
    <location>
        <begin position="235"/>
        <end position="255"/>
    </location>
</feature>
<feature type="transmembrane region" description="Helical" evidence="1">
    <location>
        <begin position="271"/>
        <end position="291"/>
    </location>
</feature>
<feature type="transmembrane region" description="Helical" evidence="1">
    <location>
        <begin position="297"/>
        <end position="317"/>
    </location>
</feature>
<feature type="transmembrane region" description="Helical" evidence="1">
    <location>
        <begin position="326"/>
        <end position="346"/>
    </location>
</feature>
<feature type="transmembrane region" description="Helical" evidence="1">
    <location>
        <begin position="373"/>
        <end position="393"/>
    </location>
</feature>
<feature type="transmembrane region" description="Helical" evidence="1">
    <location>
        <begin position="408"/>
        <end position="430"/>
    </location>
</feature>
<feature type="transmembrane region" description="Helical" evidence="1">
    <location>
        <begin position="455"/>
        <end position="475"/>
    </location>
</feature>
<comment type="function">
    <text evidence="1">NDH-1 shuttles electrons from NADH, via FMN and iron-sulfur (Fe-S) centers, to quinones in the respiratory chain. The immediate electron acceptor for the enzyme in this species is believed to be ubiquinone. Couples the redox reaction to proton translocation (for every two electrons transferred, four hydrogen ions are translocated across the cytoplasmic membrane), and thus conserves the redox energy in a proton gradient.</text>
</comment>
<comment type="catalytic activity">
    <reaction evidence="1">
        <text>a quinone + NADH + 5 H(+)(in) = a quinol + NAD(+) + 4 H(+)(out)</text>
        <dbReference type="Rhea" id="RHEA:57888"/>
        <dbReference type="ChEBI" id="CHEBI:15378"/>
        <dbReference type="ChEBI" id="CHEBI:24646"/>
        <dbReference type="ChEBI" id="CHEBI:57540"/>
        <dbReference type="ChEBI" id="CHEBI:57945"/>
        <dbReference type="ChEBI" id="CHEBI:132124"/>
    </reaction>
</comment>
<comment type="subunit">
    <text evidence="1">NDH-1 is composed of 13 different subunits. Subunits NuoA, H, J, K, L, M, N constitute the membrane sector of the complex.</text>
</comment>
<comment type="subcellular location">
    <subcellularLocation>
        <location evidence="1">Cell inner membrane</location>
        <topology evidence="1">Multi-pass membrane protein</topology>
    </subcellularLocation>
</comment>
<comment type="similarity">
    <text evidence="1">Belongs to the complex I subunit 2 family.</text>
</comment>
<name>NUON_CITK8</name>
<evidence type="ECO:0000255" key="1">
    <source>
        <dbReference type="HAMAP-Rule" id="MF_00445"/>
    </source>
</evidence>
<accession>A8ADW3</accession>
<keyword id="KW-0997">Cell inner membrane</keyword>
<keyword id="KW-1003">Cell membrane</keyword>
<keyword id="KW-0472">Membrane</keyword>
<keyword id="KW-0520">NAD</keyword>
<keyword id="KW-0874">Quinone</keyword>
<keyword id="KW-1185">Reference proteome</keyword>
<keyword id="KW-1278">Translocase</keyword>
<keyword id="KW-0812">Transmembrane</keyword>
<keyword id="KW-1133">Transmembrane helix</keyword>
<keyword id="KW-0813">Transport</keyword>
<keyword id="KW-0830">Ubiquinone</keyword>
<dbReference type="EC" id="7.1.1.-" evidence="1"/>
<dbReference type="EMBL" id="CP000822">
    <property type="protein sequence ID" value="ABV11676.1"/>
    <property type="molecule type" value="Genomic_DNA"/>
</dbReference>
<dbReference type="RefSeq" id="WP_012131501.1">
    <property type="nucleotide sequence ID" value="NC_009792.1"/>
</dbReference>
<dbReference type="SMR" id="A8ADW3"/>
<dbReference type="STRING" id="290338.CKO_00520"/>
<dbReference type="GeneID" id="45134762"/>
<dbReference type="KEGG" id="cko:CKO_00520"/>
<dbReference type="HOGENOM" id="CLU_007100_1_5_6"/>
<dbReference type="OrthoDB" id="9768329at2"/>
<dbReference type="Proteomes" id="UP000008148">
    <property type="component" value="Chromosome"/>
</dbReference>
<dbReference type="GO" id="GO:0005886">
    <property type="term" value="C:plasma membrane"/>
    <property type="evidence" value="ECO:0007669"/>
    <property type="project" value="UniProtKB-SubCell"/>
</dbReference>
<dbReference type="GO" id="GO:0008137">
    <property type="term" value="F:NADH dehydrogenase (ubiquinone) activity"/>
    <property type="evidence" value="ECO:0007669"/>
    <property type="project" value="InterPro"/>
</dbReference>
<dbReference type="GO" id="GO:0050136">
    <property type="term" value="F:NADH:ubiquinone reductase (non-electrogenic) activity"/>
    <property type="evidence" value="ECO:0007669"/>
    <property type="project" value="UniProtKB-UniRule"/>
</dbReference>
<dbReference type="GO" id="GO:0048038">
    <property type="term" value="F:quinone binding"/>
    <property type="evidence" value="ECO:0007669"/>
    <property type="project" value="UniProtKB-KW"/>
</dbReference>
<dbReference type="GO" id="GO:0042773">
    <property type="term" value="P:ATP synthesis coupled electron transport"/>
    <property type="evidence" value="ECO:0007669"/>
    <property type="project" value="InterPro"/>
</dbReference>
<dbReference type="HAMAP" id="MF_00445">
    <property type="entry name" value="NDH1_NuoN_1"/>
    <property type="match status" value="1"/>
</dbReference>
<dbReference type="InterPro" id="IPR010096">
    <property type="entry name" value="NADH-Q_OxRdtase_suN/2"/>
</dbReference>
<dbReference type="InterPro" id="IPR001750">
    <property type="entry name" value="ND/Mrp_TM"/>
</dbReference>
<dbReference type="NCBIfam" id="TIGR01770">
    <property type="entry name" value="NDH_I_N"/>
    <property type="match status" value="1"/>
</dbReference>
<dbReference type="NCBIfam" id="NF004439">
    <property type="entry name" value="PRK05777.1-1"/>
    <property type="match status" value="1"/>
</dbReference>
<dbReference type="PANTHER" id="PTHR22773">
    <property type="entry name" value="NADH DEHYDROGENASE"/>
    <property type="match status" value="1"/>
</dbReference>
<dbReference type="Pfam" id="PF00361">
    <property type="entry name" value="Proton_antipo_M"/>
    <property type="match status" value="1"/>
</dbReference>
<organism>
    <name type="scientific">Citrobacter koseri (strain ATCC BAA-895 / CDC 4225-83 / SGSC4696)</name>
    <dbReference type="NCBI Taxonomy" id="290338"/>
    <lineage>
        <taxon>Bacteria</taxon>
        <taxon>Pseudomonadati</taxon>
        <taxon>Pseudomonadota</taxon>
        <taxon>Gammaproteobacteria</taxon>
        <taxon>Enterobacterales</taxon>
        <taxon>Enterobacteriaceae</taxon>
        <taxon>Citrobacter</taxon>
    </lineage>
</organism>
<gene>
    <name evidence="1" type="primary">nuoN</name>
    <name type="ordered locus">CKO_00520</name>
</gene>